<accession>O70555</accession>
<organism>
    <name type="scientific">Mus musculus</name>
    <name type="common">Mouse</name>
    <dbReference type="NCBI Taxonomy" id="10090"/>
    <lineage>
        <taxon>Eukaryota</taxon>
        <taxon>Metazoa</taxon>
        <taxon>Chordata</taxon>
        <taxon>Craniata</taxon>
        <taxon>Vertebrata</taxon>
        <taxon>Euteleostomi</taxon>
        <taxon>Mammalia</taxon>
        <taxon>Eutheria</taxon>
        <taxon>Euarchontoglires</taxon>
        <taxon>Glires</taxon>
        <taxon>Rodentia</taxon>
        <taxon>Myomorpha</taxon>
        <taxon>Muroidea</taxon>
        <taxon>Muridae</taxon>
        <taxon>Murinae</taxon>
        <taxon>Mus</taxon>
        <taxon>Mus</taxon>
    </lineage>
</organism>
<feature type="chain" id="PRO_0000150016" description="Small proline-rich protein 2D">
    <location>
        <begin position="1"/>
        <end position="85"/>
    </location>
</feature>
<feature type="repeat" description="1">
    <location>
        <begin position="21"/>
        <end position="29"/>
    </location>
</feature>
<feature type="repeat" description="2">
    <location>
        <begin position="30"/>
        <end position="38"/>
    </location>
</feature>
<feature type="repeat" description="3">
    <location>
        <begin position="39"/>
        <end position="47"/>
    </location>
</feature>
<feature type="repeat" description="4">
    <location>
        <begin position="48"/>
        <end position="56"/>
    </location>
</feature>
<feature type="region of interest" description="Disordered" evidence="2">
    <location>
        <begin position="1"/>
        <end position="20"/>
    </location>
</feature>
<feature type="region of interest" description="4 X 9 AA approximate tandem repeats">
    <location>
        <begin position="21"/>
        <end position="56"/>
    </location>
</feature>
<feature type="region of interest" description="Disordered" evidence="2">
    <location>
        <begin position="57"/>
        <end position="85"/>
    </location>
</feature>
<feature type="compositionally biased region" description="Low complexity" evidence="2">
    <location>
        <begin position="1"/>
        <end position="11"/>
    </location>
</feature>
<name>SPR2D_MOUSE</name>
<dbReference type="EMBL" id="AJ005562">
    <property type="protein sequence ID" value="CAA06591.1"/>
    <property type="molecule type" value="mRNA"/>
</dbReference>
<dbReference type="EMBL" id="AY158988">
    <property type="protein sequence ID" value="AAN86825.1"/>
    <property type="molecule type" value="mRNA"/>
</dbReference>
<dbReference type="EMBL" id="AK008778">
    <property type="protein sequence ID" value="BAC25232.1"/>
    <property type="molecule type" value="mRNA"/>
</dbReference>
<dbReference type="CCDS" id="CCDS38510.1"/>
<dbReference type="RefSeq" id="NP_035600.1">
    <property type="nucleotide sequence ID" value="NM_011470.3"/>
</dbReference>
<dbReference type="BioGRID" id="203474">
    <property type="interactions" value="1"/>
</dbReference>
<dbReference type="FunCoup" id="O70555">
    <property type="interactions" value="7"/>
</dbReference>
<dbReference type="STRING" id="10090.ENSMUSP00000039821"/>
<dbReference type="PhosphoSitePlus" id="O70555"/>
<dbReference type="PaxDb" id="10090-ENSMUSP00000039821"/>
<dbReference type="ProteomicsDB" id="254532"/>
<dbReference type="Pumba" id="O70555"/>
<dbReference type="DNASU" id="20758"/>
<dbReference type="Ensembl" id="ENSMUST00000047477.4">
    <property type="protein sequence ID" value="ENSMUSP00000039821.4"/>
    <property type="gene ID" value="ENSMUSG00000042212.4"/>
</dbReference>
<dbReference type="GeneID" id="20758"/>
<dbReference type="KEGG" id="mmu:20758"/>
<dbReference type="UCSC" id="uc008qds.2">
    <property type="organism name" value="mouse"/>
</dbReference>
<dbReference type="AGR" id="MGI:1330347"/>
<dbReference type="CTD" id="6703"/>
<dbReference type="MGI" id="MGI:1330347">
    <property type="gene designation" value="Sprr2d"/>
</dbReference>
<dbReference type="VEuPathDB" id="HostDB:ENSMUSG00000042212"/>
<dbReference type="GeneTree" id="ENSGT01130000279573"/>
<dbReference type="HOGENOM" id="CLU_192372_0_0_1"/>
<dbReference type="InParanoid" id="O70555"/>
<dbReference type="OMA" id="PSQQKCP"/>
<dbReference type="BioGRID-ORCS" id="20758">
    <property type="hits" value="6 hits in 42 CRISPR screens"/>
</dbReference>
<dbReference type="ChiTaRS" id="Sprr2d">
    <property type="organism name" value="mouse"/>
</dbReference>
<dbReference type="PRO" id="PR:O70555"/>
<dbReference type="Proteomes" id="UP000000589">
    <property type="component" value="Chromosome 3"/>
</dbReference>
<dbReference type="RNAct" id="O70555">
    <property type="molecule type" value="protein"/>
</dbReference>
<dbReference type="Bgee" id="ENSMUSG00000042212">
    <property type="expression patterns" value="Expressed in uterine cervix and 21 other cell types or tissues"/>
</dbReference>
<dbReference type="GO" id="GO:0001533">
    <property type="term" value="C:cornified envelope"/>
    <property type="evidence" value="ECO:0000303"/>
    <property type="project" value="UniProtKB"/>
</dbReference>
<dbReference type="GO" id="GO:0005737">
    <property type="term" value="C:cytoplasm"/>
    <property type="evidence" value="ECO:0000314"/>
    <property type="project" value="UniProtKB"/>
</dbReference>
<dbReference type="GO" id="GO:0005634">
    <property type="term" value="C:nucleus"/>
    <property type="evidence" value="ECO:0000314"/>
    <property type="project" value="UniProtKB"/>
</dbReference>
<dbReference type="GO" id="GO:0008544">
    <property type="term" value="P:epidermis development"/>
    <property type="evidence" value="ECO:0000303"/>
    <property type="project" value="UniProtKB"/>
</dbReference>
<dbReference type="GO" id="GO:0008585">
    <property type="term" value="P:female gonad development"/>
    <property type="evidence" value="ECO:0000270"/>
    <property type="project" value="UniProtKB"/>
</dbReference>
<dbReference type="GO" id="GO:0031424">
    <property type="term" value="P:keratinization"/>
    <property type="evidence" value="ECO:0007669"/>
    <property type="project" value="UniProtKB-KW"/>
</dbReference>
<dbReference type="GO" id="GO:0030216">
    <property type="term" value="P:keratinocyte differentiation"/>
    <property type="evidence" value="ECO:0000303"/>
    <property type="project" value="UniProtKB"/>
</dbReference>
<dbReference type="GO" id="GO:0032355">
    <property type="term" value="P:response to estradiol"/>
    <property type="evidence" value="ECO:0000314"/>
    <property type="project" value="MGI"/>
</dbReference>
<dbReference type="InterPro" id="IPR029142">
    <property type="entry name" value="SPRR2"/>
</dbReference>
<dbReference type="Pfam" id="PF14820">
    <property type="entry name" value="SPRR2"/>
    <property type="match status" value="2"/>
</dbReference>
<dbReference type="PRINTS" id="PR01217">
    <property type="entry name" value="PRICHEXTENSN"/>
</dbReference>
<dbReference type="PRINTS" id="PR00021">
    <property type="entry name" value="PRORICH"/>
</dbReference>
<keyword id="KW-0963">Cytoplasm</keyword>
<keyword id="KW-0417">Keratinization</keyword>
<keyword id="KW-1185">Reference proteome</keyword>
<keyword id="KW-0677">Repeat</keyword>
<reference key="1">
    <citation type="journal article" date="1999" name="Genomics">
        <title>Mouse Sprr2 genes: a clustered family of genes showing differential expression in epithelial tissues.</title>
        <authorList>
            <person name="Song H.J."/>
            <person name="Poy G."/>
            <person name="Darwiche N."/>
            <person name="Lichti U."/>
            <person name="Kuroki T."/>
            <person name="Steinert P.M."/>
            <person name="Kartasova T."/>
        </authorList>
    </citation>
    <scope>NUCLEOTIDE SEQUENCE [MRNA]</scope>
    <source>
        <strain>CD-1</strain>
    </source>
</reference>
<reference key="2">
    <citation type="journal article" date="2003" name="Mamm. Genome">
        <title>Mouse Sprr locus: a tandem array of coordinately regulated genes.</title>
        <authorList>
            <person name="Patel S."/>
            <person name="Kartasova T."/>
            <person name="Segre J.A."/>
        </authorList>
    </citation>
    <scope>NUCLEOTIDE SEQUENCE [MRNA]</scope>
    <source>
        <strain>C57BL/6J</strain>
    </source>
</reference>
<reference key="3">
    <citation type="journal article" date="2005" name="Science">
        <title>The transcriptional landscape of the mammalian genome.</title>
        <authorList>
            <person name="Carninci P."/>
            <person name="Kasukawa T."/>
            <person name="Katayama S."/>
            <person name="Gough J."/>
            <person name="Frith M.C."/>
            <person name="Maeda N."/>
            <person name="Oyama R."/>
            <person name="Ravasi T."/>
            <person name="Lenhard B."/>
            <person name="Wells C."/>
            <person name="Kodzius R."/>
            <person name="Shimokawa K."/>
            <person name="Bajic V.B."/>
            <person name="Brenner S.E."/>
            <person name="Batalov S."/>
            <person name="Forrest A.R."/>
            <person name="Zavolan M."/>
            <person name="Davis M.J."/>
            <person name="Wilming L.G."/>
            <person name="Aidinis V."/>
            <person name="Allen J.E."/>
            <person name="Ambesi-Impiombato A."/>
            <person name="Apweiler R."/>
            <person name="Aturaliya R.N."/>
            <person name="Bailey T.L."/>
            <person name="Bansal M."/>
            <person name="Baxter L."/>
            <person name="Beisel K.W."/>
            <person name="Bersano T."/>
            <person name="Bono H."/>
            <person name="Chalk A.M."/>
            <person name="Chiu K.P."/>
            <person name="Choudhary V."/>
            <person name="Christoffels A."/>
            <person name="Clutterbuck D.R."/>
            <person name="Crowe M.L."/>
            <person name="Dalla E."/>
            <person name="Dalrymple B.P."/>
            <person name="de Bono B."/>
            <person name="Della Gatta G."/>
            <person name="di Bernardo D."/>
            <person name="Down T."/>
            <person name="Engstrom P."/>
            <person name="Fagiolini M."/>
            <person name="Faulkner G."/>
            <person name="Fletcher C.F."/>
            <person name="Fukushima T."/>
            <person name="Furuno M."/>
            <person name="Futaki S."/>
            <person name="Gariboldi M."/>
            <person name="Georgii-Hemming P."/>
            <person name="Gingeras T.R."/>
            <person name="Gojobori T."/>
            <person name="Green R.E."/>
            <person name="Gustincich S."/>
            <person name="Harbers M."/>
            <person name="Hayashi Y."/>
            <person name="Hensch T.K."/>
            <person name="Hirokawa N."/>
            <person name="Hill D."/>
            <person name="Huminiecki L."/>
            <person name="Iacono M."/>
            <person name="Ikeo K."/>
            <person name="Iwama A."/>
            <person name="Ishikawa T."/>
            <person name="Jakt M."/>
            <person name="Kanapin A."/>
            <person name="Katoh M."/>
            <person name="Kawasawa Y."/>
            <person name="Kelso J."/>
            <person name="Kitamura H."/>
            <person name="Kitano H."/>
            <person name="Kollias G."/>
            <person name="Krishnan S.P."/>
            <person name="Kruger A."/>
            <person name="Kummerfeld S.K."/>
            <person name="Kurochkin I.V."/>
            <person name="Lareau L.F."/>
            <person name="Lazarevic D."/>
            <person name="Lipovich L."/>
            <person name="Liu J."/>
            <person name="Liuni S."/>
            <person name="McWilliam S."/>
            <person name="Madan Babu M."/>
            <person name="Madera M."/>
            <person name="Marchionni L."/>
            <person name="Matsuda H."/>
            <person name="Matsuzawa S."/>
            <person name="Miki H."/>
            <person name="Mignone F."/>
            <person name="Miyake S."/>
            <person name="Morris K."/>
            <person name="Mottagui-Tabar S."/>
            <person name="Mulder N."/>
            <person name="Nakano N."/>
            <person name="Nakauchi H."/>
            <person name="Ng P."/>
            <person name="Nilsson R."/>
            <person name="Nishiguchi S."/>
            <person name="Nishikawa S."/>
            <person name="Nori F."/>
            <person name="Ohara O."/>
            <person name="Okazaki Y."/>
            <person name="Orlando V."/>
            <person name="Pang K.C."/>
            <person name="Pavan W.J."/>
            <person name="Pavesi G."/>
            <person name="Pesole G."/>
            <person name="Petrovsky N."/>
            <person name="Piazza S."/>
            <person name="Reed J."/>
            <person name="Reid J.F."/>
            <person name="Ring B.Z."/>
            <person name="Ringwald M."/>
            <person name="Rost B."/>
            <person name="Ruan Y."/>
            <person name="Salzberg S.L."/>
            <person name="Sandelin A."/>
            <person name="Schneider C."/>
            <person name="Schoenbach C."/>
            <person name="Sekiguchi K."/>
            <person name="Semple C.A."/>
            <person name="Seno S."/>
            <person name="Sessa L."/>
            <person name="Sheng Y."/>
            <person name="Shibata Y."/>
            <person name="Shimada H."/>
            <person name="Shimada K."/>
            <person name="Silva D."/>
            <person name="Sinclair B."/>
            <person name="Sperling S."/>
            <person name="Stupka E."/>
            <person name="Sugiura K."/>
            <person name="Sultana R."/>
            <person name="Takenaka Y."/>
            <person name="Taki K."/>
            <person name="Tammoja K."/>
            <person name="Tan S.L."/>
            <person name="Tang S."/>
            <person name="Taylor M.S."/>
            <person name="Tegner J."/>
            <person name="Teichmann S.A."/>
            <person name="Ueda H.R."/>
            <person name="van Nimwegen E."/>
            <person name="Verardo R."/>
            <person name="Wei C.L."/>
            <person name="Yagi K."/>
            <person name="Yamanishi H."/>
            <person name="Zabarovsky E."/>
            <person name="Zhu S."/>
            <person name="Zimmer A."/>
            <person name="Hide W."/>
            <person name="Bult C."/>
            <person name="Grimmond S.M."/>
            <person name="Teasdale R.D."/>
            <person name="Liu E.T."/>
            <person name="Brusic V."/>
            <person name="Quackenbush J."/>
            <person name="Wahlestedt C."/>
            <person name="Mattick J.S."/>
            <person name="Hume D.A."/>
            <person name="Kai C."/>
            <person name="Sasaki D."/>
            <person name="Tomaru Y."/>
            <person name="Fukuda S."/>
            <person name="Kanamori-Katayama M."/>
            <person name="Suzuki M."/>
            <person name="Aoki J."/>
            <person name="Arakawa T."/>
            <person name="Iida J."/>
            <person name="Imamura K."/>
            <person name="Itoh M."/>
            <person name="Kato T."/>
            <person name="Kawaji H."/>
            <person name="Kawagashira N."/>
            <person name="Kawashima T."/>
            <person name="Kojima M."/>
            <person name="Kondo S."/>
            <person name="Konno H."/>
            <person name="Nakano K."/>
            <person name="Ninomiya N."/>
            <person name="Nishio T."/>
            <person name="Okada M."/>
            <person name="Plessy C."/>
            <person name="Shibata K."/>
            <person name="Shiraki T."/>
            <person name="Suzuki S."/>
            <person name="Tagami M."/>
            <person name="Waki K."/>
            <person name="Watahiki A."/>
            <person name="Okamura-Oho Y."/>
            <person name="Suzuki H."/>
            <person name="Kawai J."/>
            <person name="Hayashizaki Y."/>
        </authorList>
    </citation>
    <scope>NUCLEOTIDE SEQUENCE [LARGE SCALE MRNA]</scope>
    <source>
        <strain>C57BL/6J</strain>
        <tissue>Stomach</tissue>
    </source>
</reference>
<reference key="4">
    <citation type="journal article" date="2004" name="Mol. Cells">
        <title>Estrogen regulates the expression of the small proline-rich 2 gene family in the mouse uterus.</title>
        <authorList>
            <person name="Hong S.H."/>
            <person name="Nah H.Y."/>
            <person name="Lee J.Y."/>
            <person name="Lee Y.J."/>
            <person name="Lee J.W."/>
            <person name="Gye M.C."/>
            <person name="Kim C.H."/>
            <person name="Kang B.M."/>
            <person name="Kim M.K."/>
        </authorList>
    </citation>
    <scope>TISSUE SPECIFICITY</scope>
    <scope>DEVELOPMENTAL STAGE</scope>
    <scope>INDUCTION</scope>
</reference>
<sequence length="85" mass="9243">MSYQQQQCKQPCQPPPVCPPKKCPEPCPPLKCPEPCPPPKCPEPCPPPKCPEPCPEPCPPPSCQQKCPPAQPPPPCQQKCPPKSK</sequence>
<protein>
    <recommendedName>
        <fullName>Small proline-rich protein 2D</fullName>
    </recommendedName>
</protein>
<gene>
    <name type="primary">Sprr2d</name>
</gene>
<comment type="function">
    <text evidence="1">Cross-linked envelope protein of keratinocytes. It is a keratinocyte protein that first appears in the cell cytosol, but ultimately becomes cross-linked to membrane proteins by transglutaminase. All that results in the formation of an insoluble envelope beneath the plasma membrane (By similarity).</text>
</comment>
<comment type="subcellular location">
    <subcellularLocation>
        <location evidence="1">Cytoplasm</location>
    </subcellularLocation>
</comment>
<comment type="tissue specificity">
    <text evidence="3">Expressed in uterus.</text>
</comment>
<comment type="developmental stage">
    <text evidence="3">During early pregnancy, uterine expression is markedly increased at 1 dpc and 2 dpc, with levels decreasing from 3 dpc onwards.</text>
</comment>
<comment type="induction">
    <text evidence="3">Up-regulated by estrogen in the uterus of ovariectomized animals, with strongly increased expression detected in luminal epithelial cells at 6 and 12 hours after hormone injection.</text>
</comment>
<comment type="similarity">
    <text evidence="4">Belongs to the cornifin (SPRR) family.</text>
</comment>
<proteinExistence type="evidence at transcript level"/>
<evidence type="ECO:0000250" key="1"/>
<evidence type="ECO:0000256" key="2">
    <source>
        <dbReference type="SAM" id="MobiDB-lite"/>
    </source>
</evidence>
<evidence type="ECO:0000269" key="3">
    <source>
    </source>
</evidence>
<evidence type="ECO:0000305" key="4"/>